<sequence>MAKGVREKIKLVSSAGTGHFYTTTKNKRTKPEKLELKKFDPVVRQHVLYKEAKIK</sequence>
<feature type="chain" id="PRO_1000115169" description="Large ribosomal subunit protein bL33">
    <location>
        <begin position="1"/>
        <end position="55"/>
    </location>
</feature>
<accession>A9R676</accession>
<reference key="1">
    <citation type="journal article" date="2010" name="J. Bacteriol.">
        <title>Genome sequence of the deep-rooted Yersinia pestis strain Angola reveals new insights into the evolution and pangenome of the plague bacterium.</title>
        <authorList>
            <person name="Eppinger M."/>
            <person name="Worsham P.L."/>
            <person name="Nikolich M.P."/>
            <person name="Riley D.R."/>
            <person name="Sebastian Y."/>
            <person name="Mou S."/>
            <person name="Achtman M."/>
            <person name="Lindler L.E."/>
            <person name="Ravel J."/>
        </authorList>
    </citation>
    <scope>NUCLEOTIDE SEQUENCE [LARGE SCALE GENOMIC DNA]</scope>
    <source>
        <strain>Angola</strain>
    </source>
</reference>
<name>RL33_YERPG</name>
<protein>
    <recommendedName>
        <fullName evidence="1">Large ribosomal subunit protein bL33</fullName>
    </recommendedName>
    <alternativeName>
        <fullName evidence="2">50S ribosomal protein L33</fullName>
    </alternativeName>
</protein>
<keyword id="KW-0687">Ribonucleoprotein</keyword>
<keyword id="KW-0689">Ribosomal protein</keyword>
<comment type="similarity">
    <text evidence="1">Belongs to the bacterial ribosomal protein bL33 family.</text>
</comment>
<proteinExistence type="inferred from homology"/>
<evidence type="ECO:0000255" key="1">
    <source>
        <dbReference type="HAMAP-Rule" id="MF_00294"/>
    </source>
</evidence>
<evidence type="ECO:0000305" key="2"/>
<gene>
    <name evidence="1" type="primary">rpmG</name>
    <name type="ordered locus">YpAngola_A0057</name>
</gene>
<organism>
    <name type="scientific">Yersinia pestis bv. Antiqua (strain Angola)</name>
    <dbReference type="NCBI Taxonomy" id="349746"/>
    <lineage>
        <taxon>Bacteria</taxon>
        <taxon>Pseudomonadati</taxon>
        <taxon>Pseudomonadota</taxon>
        <taxon>Gammaproteobacteria</taxon>
        <taxon>Enterobacterales</taxon>
        <taxon>Yersiniaceae</taxon>
        <taxon>Yersinia</taxon>
    </lineage>
</organism>
<dbReference type="EMBL" id="CP000901">
    <property type="protein sequence ID" value="ABX86768.1"/>
    <property type="molecule type" value="Genomic_DNA"/>
</dbReference>
<dbReference type="RefSeq" id="WP_002208990.1">
    <property type="nucleotide sequence ID" value="NZ_CP009935.1"/>
</dbReference>
<dbReference type="SMR" id="A9R676"/>
<dbReference type="GeneID" id="96663532"/>
<dbReference type="KEGG" id="ypg:YpAngola_A0057"/>
<dbReference type="PATRIC" id="fig|349746.12.peg.1000"/>
<dbReference type="GO" id="GO:0022625">
    <property type="term" value="C:cytosolic large ribosomal subunit"/>
    <property type="evidence" value="ECO:0007669"/>
    <property type="project" value="TreeGrafter"/>
</dbReference>
<dbReference type="GO" id="GO:0003735">
    <property type="term" value="F:structural constituent of ribosome"/>
    <property type="evidence" value="ECO:0007669"/>
    <property type="project" value="InterPro"/>
</dbReference>
<dbReference type="GO" id="GO:0006412">
    <property type="term" value="P:translation"/>
    <property type="evidence" value="ECO:0007669"/>
    <property type="project" value="UniProtKB-UniRule"/>
</dbReference>
<dbReference type="FunFam" id="2.20.28.120:FF:000001">
    <property type="entry name" value="50S ribosomal protein L33"/>
    <property type="match status" value="1"/>
</dbReference>
<dbReference type="Gene3D" id="2.20.28.120">
    <property type="entry name" value="Ribosomal protein L33"/>
    <property type="match status" value="1"/>
</dbReference>
<dbReference type="HAMAP" id="MF_00294">
    <property type="entry name" value="Ribosomal_bL33"/>
    <property type="match status" value="1"/>
</dbReference>
<dbReference type="InterPro" id="IPR001705">
    <property type="entry name" value="Ribosomal_bL33"/>
</dbReference>
<dbReference type="InterPro" id="IPR018264">
    <property type="entry name" value="Ribosomal_bL33_CS"/>
</dbReference>
<dbReference type="InterPro" id="IPR038584">
    <property type="entry name" value="Ribosomal_bL33_sf"/>
</dbReference>
<dbReference type="InterPro" id="IPR011332">
    <property type="entry name" value="Ribosomal_zn-bd"/>
</dbReference>
<dbReference type="NCBIfam" id="NF001860">
    <property type="entry name" value="PRK00595.1"/>
    <property type="match status" value="1"/>
</dbReference>
<dbReference type="NCBIfam" id="TIGR01023">
    <property type="entry name" value="rpmG_bact"/>
    <property type="match status" value="1"/>
</dbReference>
<dbReference type="PANTHER" id="PTHR15238">
    <property type="entry name" value="54S RIBOSOMAL PROTEIN L39, MITOCHONDRIAL"/>
    <property type="match status" value="1"/>
</dbReference>
<dbReference type="PANTHER" id="PTHR15238:SF1">
    <property type="entry name" value="LARGE RIBOSOMAL SUBUNIT PROTEIN BL33M"/>
    <property type="match status" value="1"/>
</dbReference>
<dbReference type="Pfam" id="PF00471">
    <property type="entry name" value="Ribosomal_L33"/>
    <property type="match status" value="1"/>
</dbReference>
<dbReference type="SUPFAM" id="SSF57829">
    <property type="entry name" value="Zn-binding ribosomal proteins"/>
    <property type="match status" value="1"/>
</dbReference>
<dbReference type="PROSITE" id="PS00582">
    <property type="entry name" value="RIBOSOMAL_L33"/>
    <property type="match status" value="1"/>
</dbReference>